<reference key="1">
    <citation type="journal article" date="1998" name="Science">
        <title>Complete genome sequence of Treponema pallidum, the syphilis spirochete.</title>
        <authorList>
            <person name="Fraser C.M."/>
            <person name="Norris S.J."/>
            <person name="Weinstock G.M."/>
            <person name="White O."/>
            <person name="Sutton G.G."/>
            <person name="Dodson R.J."/>
            <person name="Gwinn M.L."/>
            <person name="Hickey E.K."/>
            <person name="Clayton R.A."/>
            <person name="Ketchum K.A."/>
            <person name="Sodergren E."/>
            <person name="Hardham J.M."/>
            <person name="McLeod M.P."/>
            <person name="Salzberg S.L."/>
            <person name="Peterson J.D."/>
            <person name="Khalak H.G."/>
            <person name="Richardson D.L."/>
            <person name="Howell J.K."/>
            <person name="Chidambaram M."/>
            <person name="Utterback T.R."/>
            <person name="McDonald L.A."/>
            <person name="Artiach P."/>
            <person name="Bowman C."/>
            <person name="Cotton M.D."/>
            <person name="Fujii C."/>
            <person name="Garland S.A."/>
            <person name="Hatch B."/>
            <person name="Horst K."/>
            <person name="Roberts K.M."/>
            <person name="Sandusky M."/>
            <person name="Weidman J.F."/>
            <person name="Smith H.O."/>
            <person name="Venter J.C."/>
        </authorList>
    </citation>
    <scope>NUCLEOTIDE SEQUENCE [LARGE SCALE GENOMIC DNA]</scope>
    <source>
        <strain>Nichols</strain>
    </source>
</reference>
<evidence type="ECO:0000255" key="1">
    <source>
        <dbReference type="HAMAP-Rule" id="MF_00503"/>
    </source>
</evidence>
<evidence type="ECO:0000305" key="2"/>
<protein>
    <recommendedName>
        <fullName evidence="1">Large ribosomal subunit protein bL9</fullName>
    </recommendedName>
    <alternativeName>
        <fullName evidence="2">50S ribosomal protein L9</fullName>
    </alternativeName>
</protein>
<feature type="chain" id="PRO_0000176699" description="Large ribosomal subunit protein bL9">
    <location>
        <begin position="1"/>
        <end position="156"/>
    </location>
</feature>
<organism>
    <name type="scientific">Treponema pallidum (strain Nichols)</name>
    <dbReference type="NCBI Taxonomy" id="243276"/>
    <lineage>
        <taxon>Bacteria</taxon>
        <taxon>Pseudomonadati</taxon>
        <taxon>Spirochaetota</taxon>
        <taxon>Spirochaetia</taxon>
        <taxon>Spirochaetales</taxon>
        <taxon>Treponemataceae</taxon>
        <taxon>Treponema</taxon>
    </lineage>
</organism>
<proteinExistence type="inferred from homology"/>
<sequence length="156" mass="17504">MKIILNQDVKILGEEGDVKEVAAGYFRNYLYPRNLAVPHNRFTVARFKQRQQDIEMRKSLKRQDAANLKARLEAQPVVIAMPAGTNGKLYGAVTSHTVAEQLACMGFEVERKRVEVPGLTLKCVGNYHVTIRLYEEICAVVPVTIKNQSEADSVSE</sequence>
<dbReference type="EMBL" id="AE000520">
    <property type="protein sequence ID" value="AAC65055.1"/>
    <property type="molecule type" value="Genomic_DNA"/>
</dbReference>
<dbReference type="PIR" id="D71370">
    <property type="entry name" value="D71370"/>
</dbReference>
<dbReference type="RefSeq" id="WP_010881509.1">
    <property type="nucleotide sequence ID" value="NC_021490.2"/>
</dbReference>
<dbReference type="SMR" id="O83099"/>
<dbReference type="IntAct" id="O83099">
    <property type="interactions" value="82"/>
</dbReference>
<dbReference type="STRING" id="243276.TP_0060"/>
<dbReference type="EnsemblBacteria" id="AAC65055">
    <property type="protein sequence ID" value="AAC65055"/>
    <property type="gene ID" value="TP_0060"/>
</dbReference>
<dbReference type="GeneID" id="93875855"/>
<dbReference type="KEGG" id="tpa:TP_0060"/>
<dbReference type="KEGG" id="tpw:TPANIC_0060"/>
<dbReference type="eggNOG" id="COG0359">
    <property type="taxonomic scope" value="Bacteria"/>
</dbReference>
<dbReference type="HOGENOM" id="CLU_078938_3_0_12"/>
<dbReference type="OrthoDB" id="9788336at2"/>
<dbReference type="Proteomes" id="UP000000811">
    <property type="component" value="Chromosome"/>
</dbReference>
<dbReference type="GO" id="GO:1990904">
    <property type="term" value="C:ribonucleoprotein complex"/>
    <property type="evidence" value="ECO:0007669"/>
    <property type="project" value="UniProtKB-KW"/>
</dbReference>
<dbReference type="GO" id="GO:0005840">
    <property type="term" value="C:ribosome"/>
    <property type="evidence" value="ECO:0007669"/>
    <property type="project" value="UniProtKB-KW"/>
</dbReference>
<dbReference type="GO" id="GO:0019843">
    <property type="term" value="F:rRNA binding"/>
    <property type="evidence" value="ECO:0007669"/>
    <property type="project" value="UniProtKB-UniRule"/>
</dbReference>
<dbReference type="GO" id="GO:0003735">
    <property type="term" value="F:structural constituent of ribosome"/>
    <property type="evidence" value="ECO:0007669"/>
    <property type="project" value="InterPro"/>
</dbReference>
<dbReference type="GO" id="GO:0006412">
    <property type="term" value="P:translation"/>
    <property type="evidence" value="ECO:0007669"/>
    <property type="project" value="UniProtKB-UniRule"/>
</dbReference>
<dbReference type="Gene3D" id="3.10.430.100">
    <property type="entry name" value="Ribosomal protein L9, C-terminal domain"/>
    <property type="match status" value="1"/>
</dbReference>
<dbReference type="Gene3D" id="3.40.5.10">
    <property type="entry name" value="Ribosomal protein L9, N-terminal domain"/>
    <property type="match status" value="1"/>
</dbReference>
<dbReference type="HAMAP" id="MF_00503">
    <property type="entry name" value="Ribosomal_bL9"/>
    <property type="match status" value="1"/>
</dbReference>
<dbReference type="InterPro" id="IPR000244">
    <property type="entry name" value="Ribosomal_bL9"/>
</dbReference>
<dbReference type="InterPro" id="IPR009027">
    <property type="entry name" value="Ribosomal_bL9/RNase_H1_N"/>
</dbReference>
<dbReference type="InterPro" id="IPR020594">
    <property type="entry name" value="Ribosomal_bL9_bac/chp"/>
</dbReference>
<dbReference type="InterPro" id="IPR020069">
    <property type="entry name" value="Ribosomal_bL9_C"/>
</dbReference>
<dbReference type="InterPro" id="IPR036791">
    <property type="entry name" value="Ribosomal_bL9_C_sf"/>
</dbReference>
<dbReference type="InterPro" id="IPR020070">
    <property type="entry name" value="Ribosomal_bL9_N"/>
</dbReference>
<dbReference type="InterPro" id="IPR036935">
    <property type="entry name" value="Ribosomal_bL9_N_sf"/>
</dbReference>
<dbReference type="NCBIfam" id="TIGR00158">
    <property type="entry name" value="L9"/>
    <property type="match status" value="1"/>
</dbReference>
<dbReference type="PANTHER" id="PTHR21368">
    <property type="entry name" value="50S RIBOSOMAL PROTEIN L9"/>
    <property type="match status" value="1"/>
</dbReference>
<dbReference type="Pfam" id="PF03948">
    <property type="entry name" value="Ribosomal_L9_C"/>
    <property type="match status" value="1"/>
</dbReference>
<dbReference type="Pfam" id="PF01281">
    <property type="entry name" value="Ribosomal_L9_N"/>
    <property type="match status" value="1"/>
</dbReference>
<dbReference type="SUPFAM" id="SSF55658">
    <property type="entry name" value="L9 N-domain-like"/>
    <property type="match status" value="1"/>
</dbReference>
<dbReference type="SUPFAM" id="SSF55653">
    <property type="entry name" value="Ribosomal protein L9 C-domain"/>
    <property type="match status" value="1"/>
</dbReference>
<dbReference type="PROSITE" id="PS00651">
    <property type="entry name" value="RIBOSOMAL_L9"/>
    <property type="match status" value="1"/>
</dbReference>
<comment type="function">
    <text evidence="1">Binds to the 23S rRNA.</text>
</comment>
<comment type="similarity">
    <text evidence="1">Belongs to the bacterial ribosomal protein bL9 family.</text>
</comment>
<keyword id="KW-1185">Reference proteome</keyword>
<keyword id="KW-0687">Ribonucleoprotein</keyword>
<keyword id="KW-0689">Ribosomal protein</keyword>
<keyword id="KW-0694">RNA-binding</keyword>
<keyword id="KW-0699">rRNA-binding</keyword>
<gene>
    <name evidence="1" type="primary">rplI</name>
    <name type="ordered locus">TP_0060</name>
</gene>
<accession>O83099</accession>
<name>RL9_TREPA</name>